<gene>
    <name evidence="1" type="primary">hflX</name>
    <name type="ordered locus">FP2414</name>
</gene>
<accession>A6H294</accession>
<dbReference type="EMBL" id="AM398681">
    <property type="protein sequence ID" value="CAL44468.1"/>
    <property type="molecule type" value="Genomic_DNA"/>
</dbReference>
<dbReference type="RefSeq" id="WP_011964502.1">
    <property type="nucleotide sequence ID" value="NC_009613.3"/>
</dbReference>
<dbReference type="RefSeq" id="YP_001297269.1">
    <property type="nucleotide sequence ID" value="NC_009613.3"/>
</dbReference>
<dbReference type="SMR" id="A6H294"/>
<dbReference type="STRING" id="402612.FP2414"/>
<dbReference type="EnsemblBacteria" id="CAL44468">
    <property type="protein sequence ID" value="CAL44468"/>
    <property type="gene ID" value="FP2414"/>
</dbReference>
<dbReference type="GeneID" id="66553522"/>
<dbReference type="KEGG" id="fps:FP2414"/>
<dbReference type="PATRIC" id="fig|402612.5.peg.2470"/>
<dbReference type="eggNOG" id="COG2262">
    <property type="taxonomic scope" value="Bacteria"/>
</dbReference>
<dbReference type="HOGENOM" id="CLU_019597_2_1_10"/>
<dbReference type="OrthoDB" id="9812272at2"/>
<dbReference type="Proteomes" id="UP000006394">
    <property type="component" value="Chromosome"/>
</dbReference>
<dbReference type="GO" id="GO:0005737">
    <property type="term" value="C:cytoplasm"/>
    <property type="evidence" value="ECO:0007669"/>
    <property type="project" value="UniProtKB-SubCell"/>
</dbReference>
<dbReference type="GO" id="GO:0005525">
    <property type="term" value="F:GTP binding"/>
    <property type="evidence" value="ECO:0007669"/>
    <property type="project" value="UniProtKB-UniRule"/>
</dbReference>
<dbReference type="GO" id="GO:0003924">
    <property type="term" value="F:GTPase activity"/>
    <property type="evidence" value="ECO:0007669"/>
    <property type="project" value="UniProtKB-UniRule"/>
</dbReference>
<dbReference type="GO" id="GO:0046872">
    <property type="term" value="F:metal ion binding"/>
    <property type="evidence" value="ECO:0007669"/>
    <property type="project" value="UniProtKB-KW"/>
</dbReference>
<dbReference type="GO" id="GO:0043022">
    <property type="term" value="F:ribosome binding"/>
    <property type="evidence" value="ECO:0007669"/>
    <property type="project" value="TreeGrafter"/>
</dbReference>
<dbReference type="CDD" id="cd01878">
    <property type="entry name" value="HflX"/>
    <property type="match status" value="1"/>
</dbReference>
<dbReference type="FunFam" id="3.40.50.11060:FF:000001">
    <property type="entry name" value="GTPase HflX"/>
    <property type="match status" value="1"/>
</dbReference>
<dbReference type="FunFam" id="3.40.50.300:FF:000955">
    <property type="entry name" value="GTPase HflX"/>
    <property type="match status" value="1"/>
</dbReference>
<dbReference type="Gene3D" id="6.10.250.2860">
    <property type="match status" value="1"/>
</dbReference>
<dbReference type="Gene3D" id="3.40.50.11060">
    <property type="entry name" value="GTPase HflX, N-terminal domain"/>
    <property type="match status" value="1"/>
</dbReference>
<dbReference type="Gene3D" id="3.40.50.300">
    <property type="entry name" value="P-loop containing nucleotide triphosphate hydrolases"/>
    <property type="match status" value="1"/>
</dbReference>
<dbReference type="HAMAP" id="MF_00900">
    <property type="entry name" value="GTPase_HflX"/>
    <property type="match status" value="1"/>
</dbReference>
<dbReference type="InterPro" id="IPR030394">
    <property type="entry name" value="G_HFLX_dom"/>
</dbReference>
<dbReference type="InterPro" id="IPR006073">
    <property type="entry name" value="GTP-bd"/>
</dbReference>
<dbReference type="InterPro" id="IPR032305">
    <property type="entry name" value="GTP-bd_M"/>
</dbReference>
<dbReference type="InterPro" id="IPR016496">
    <property type="entry name" value="GTPase_HflX"/>
</dbReference>
<dbReference type="InterPro" id="IPR025121">
    <property type="entry name" value="GTPase_HflX_N"/>
</dbReference>
<dbReference type="InterPro" id="IPR042108">
    <property type="entry name" value="GTPase_HflX_N_sf"/>
</dbReference>
<dbReference type="InterPro" id="IPR027417">
    <property type="entry name" value="P-loop_NTPase"/>
</dbReference>
<dbReference type="NCBIfam" id="TIGR03156">
    <property type="entry name" value="GTP_HflX"/>
    <property type="match status" value="1"/>
</dbReference>
<dbReference type="PANTHER" id="PTHR10229:SF0">
    <property type="entry name" value="GTP-BINDING PROTEIN 6-RELATED"/>
    <property type="match status" value="1"/>
</dbReference>
<dbReference type="PANTHER" id="PTHR10229">
    <property type="entry name" value="GTP-BINDING PROTEIN HFLX"/>
    <property type="match status" value="1"/>
</dbReference>
<dbReference type="Pfam" id="PF16360">
    <property type="entry name" value="GTP-bdg_M"/>
    <property type="match status" value="1"/>
</dbReference>
<dbReference type="Pfam" id="PF13167">
    <property type="entry name" value="GTP-bdg_N"/>
    <property type="match status" value="1"/>
</dbReference>
<dbReference type="Pfam" id="PF01926">
    <property type="entry name" value="MMR_HSR1"/>
    <property type="match status" value="1"/>
</dbReference>
<dbReference type="PIRSF" id="PIRSF006809">
    <property type="entry name" value="GTP-binding_hflX_prd"/>
    <property type="match status" value="1"/>
</dbReference>
<dbReference type="PRINTS" id="PR00326">
    <property type="entry name" value="GTP1OBG"/>
</dbReference>
<dbReference type="SUPFAM" id="SSF52540">
    <property type="entry name" value="P-loop containing nucleoside triphosphate hydrolases"/>
    <property type="match status" value="1"/>
</dbReference>
<dbReference type="PROSITE" id="PS51705">
    <property type="entry name" value="G_HFLX"/>
    <property type="match status" value="1"/>
</dbReference>
<protein>
    <recommendedName>
        <fullName evidence="1">GTPase HflX</fullName>
    </recommendedName>
    <alternativeName>
        <fullName evidence="1">GTP-binding protein HflX</fullName>
    </alternativeName>
</protein>
<reference key="1">
    <citation type="journal article" date="2007" name="Nat. Biotechnol.">
        <title>Complete genome sequence of the fish pathogen Flavobacterium psychrophilum.</title>
        <authorList>
            <person name="Duchaud E."/>
            <person name="Boussaha M."/>
            <person name="Loux V."/>
            <person name="Bernardet J.-F."/>
            <person name="Michel C."/>
            <person name="Kerouault B."/>
            <person name="Mondot S."/>
            <person name="Nicolas P."/>
            <person name="Bossy R."/>
            <person name="Caron C."/>
            <person name="Bessieres P."/>
            <person name="Gibrat J.-F."/>
            <person name="Claverol S."/>
            <person name="Dumetz F."/>
            <person name="Le Henaff M."/>
            <person name="Benmansour A."/>
        </authorList>
    </citation>
    <scope>NUCLEOTIDE SEQUENCE [LARGE SCALE GENOMIC DNA]</scope>
    <source>
        <strain>ATCC 49511 / DSM 21280 / CIP 103535 / JIP02/86</strain>
    </source>
</reference>
<feature type="chain" id="PRO_0000412657" description="GTPase HflX">
    <location>
        <begin position="1"/>
        <end position="413"/>
    </location>
</feature>
<feature type="domain" description="Hflx-type G" evidence="1">
    <location>
        <begin position="200"/>
        <end position="386"/>
    </location>
</feature>
<feature type="binding site" evidence="1">
    <location>
        <begin position="206"/>
        <end position="213"/>
    </location>
    <ligand>
        <name>GTP</name>
        <dbReference type="ChEBI" id="CHEBI:37565"/>
    </ligand>
</feature>
<feature type="binding site" evidence="1">
    <location>
        <position position="213"/>
    </location>
    <ligand>
        <name>Mg(2+)</name>
        <dbReference type="ChEBI" id="CHEBI:18420"/>
    </ligand>
</feature>
<feature type="binding site" evidence="1">
    <location>
        <begin position="231"/>
        <end position="235"/>
    </location>
    <ligand>
        <name>GTP</name>
        <dbReference type="ChEBI" id="CHEBI:37565"/>
    </ligand>
</feature>
<feature type="binding site" evidence="1">
    <location>
        <position position="233"/>
    </location>
    <ligand>
        <name>Mg(2+)</name>
        <dbReference type="ChEBI" id="CHEBI:18420"/>
    </ligand>
</feature>
<feature type="binding site" evidence="1">
    <location>
        <begin position="252"/>
        <end position="255"/>
    </location>
    <ligand>
        <name>GTP</name>
        <dbReference type="ChEBI" id="CHEBI:37565"/>
    </ligand>
</feature>
<feature type="binding site" evidence="1">
    <location>
        <begin position="318"/>
        <end position="321"/>
    </location>
    <ligand>
        <name>GTP</name>
        <dbReference type="ChEBI" id="CHEBI:37565"/>
    </ligand>
</feature>
<feature type="binding site" evidence="1">
    <location>
        <begin position="364"/>
        <end position="366"/>
    </location>
    <ligand>
        <name>GTP</name>
        <dbReference type="ChEBI" id="CHEBI:37565"/>
    </ligand>
</feature>
<organism>
    <name type="scientific">Flavobacterium psychrophilum (strain ATCC 49511 / DSM 21280 / CIP 103535 / JIP02/86)</name>
    <dbReference type="NCBI Taxonomy" id="402612"/>
    <lineage>
        <taxon>Bacteria</taxon>
        <taxon>Pseudomonadati</taxon>
        <taxon>Bacteroidota</taxon>
        <taxon>Flavobacteriia</taxon>
        <taxon>Flavobacteriales</taxon>
        <taxon>Flavobacteriaceae</taxon>
        <taxon>Flavobacterium</taxon>
    </lineage>
</organism>
<sequence length="413" mass="47692">MLEKETINFEKTIIVGIVTQNQSEEKLKEYLDELEFLTFTAGGEVVKRFSQKMERPNPKTFLGTGKIEEINLYVLENGISTIVFDDELTPSQQKNISKIIDCKILDRTHLILDIFAQRAETSYARTQVELAQCIYLLPRLSGMWTHLERQKGGIGMRGPGETEIETDRRIVRDRIALLKEKIKIIDKQQATQRGNRGAMVRVALVGYTNVGKSTLMNAVGKSDVFVENKLFATLDTTVRKVVIKNLPFLLSDTVGFIRKLPTQLVDSFKSTLDEVREADLLLHVVDISHQDFEDHIDAVNKILLDIKSADKPTIMVFNKIDAYKHLTIDADDLMTERTSKHYTLQEWKNTWMNKVGEQNALFISATNKENFEEFRKKVYETVREIHITRFPYNKFLYPDYEDAIDKEEEQDQD</sequence>
<evidence type="ECO:0000255" key="1">
    <source>
        <dbReference type="HAMAP-Rule" id="MF_00900"/>
    </source>
</evidence>
<name>HFLX_FLAPJ</name>
<comment type="function">
    <text evidence="1">GTPase that associates with the 50S ribosomal subunit and may have a role during protein synthesis or ribosome biogenesis.</text>
</comment>
<comment type="cofactor">
    <cofactor evidence="1">
        <name>Mg(2+)</name>
        <dbReference type="ChEBI" id="CHEBI:18420"/>
    </cofactor>
</comment>
<comment type="subunit">
    <text evidence="1">Monomer. Associates with the 50S ribosomal subunit.</text>
</comment>
<comment type="subcellular location">
    <subcellularLocation>
        <location evidence="1">Cytoplasm</location>
    </subcellularLocation>
    <text evidence="1">May associate with membranes.</text>
</comment>
<comment type="similarity">
    <text evidence="1">Belongs to the TRAFAC class OBG-HflX-like GTPase superfamily. HflX GTPase family.</text>
</comment>
<proteinExistence type="inferred from homology"/>
<keyword id="KW-0963">Cytoplasm</keyword>
<keyword id="KW-0342">GTP-binding</keyword>
<keyword id="KW-0460">Magnesium</keyword>
<keyword id="KW-0479">Metal-binding</keyword>
<keyword id="KW-0547">Nucleotide-binding</keyword>
<keyword id="KW-1185">Reference proteome</keyword>